<comment type="function">
    <text evidence="1">NDH-1 shuttles electrons from NADH, via FMN and iron-sulfur (Fe-S) centers, to quinones in the respiratory chain. The immediate electron acceptor for the enzyme in this species is believed to be a menaquinone. Couples the redox reaction to proton translocation (for every two electrons transferred, four hydrogen ions are translocated across the cytoplasmic membrane), and thus conserves the redox energy in a proton gradient.</text>
</comment>
<comment type="catalytic activity">
    <reaction evidence="1">
        <text>a quinone + NADH + 5 H(+)(in) = a quinol + NAD(+) + 4 H(+)(out)</text>
        <dbReference type="Rhea" id="RHEA:57888"/>
        <dbReference type="ChEBI" id="CHEBI:15378"/>
        <dbReference type="ChEBI" id="CHEBI:24646"/>
        <dbReference type="ChEBI" id="CHEBI:57540"/>
        <dbReference type="ChEBI" id="CHEBI:57945"/>
        <dbReference type="ChEBI" id="CHEBI:132124"/>
    </reaction>
</comment>
<comment type="cofactor">
    <cofactor evidence="1">
        <name>[4Fe-4S] cluster</name>
        <dbReference type="ChEBI" id="CHEBI:49883"/>
    </cofactor>
    <text evidence="1">Binds 1 [4Fe-4S] cluster.</text>
</comment>
<comment type="subunit">
    <text evidence="1">NDH-1 is composed of 14 different subunits. Subunits NuoB, C, D, E, F, and G constitute the peripheral sector of the complex.</text>
</comment>
<comment type="subcellular location">
    <subcellularLocation>
        <location evidence="1">Cell membrane</location>
        <topology evidence="1">Peripheral membrane protein</topology>
        <orientation evidence="1">Cytoplasmic side</orientation>
    </subcellularLocation>
</comment>
<comment type="similarity">
    <text evidence="1">Belongs to the complex I 20 kDa subunit family.</text>
</comment>
<proteinExistence type="inferred from homology"/>
<name>NUOB_ACIC1</name>
<dbReference type="EC" id="7.1.1.-" evidence="1"/>
<dbReference type="EMBL" id="CP000481">
    <property type="protein sequence ID" value="ABK52042.1"/>
    <property type="molecule type" value="Genomic_DNA"/>
</dbReference>
<dbReference type="RefSeq" id="WP_011719105.1">
    <property type="nucleotide sequence ID" value="NC_008578.1"/>
</dbReference>
<dbReference type="SMR" id="A0LRI2"/>
<dbReference type="FunCoup" id="A0LRI2">
    <property type="interactions" value="304"/>
</dbReference>
<dbReference type="STRING" id="351607.Acel_0268"/>
<dbReference type="KEGG" id="ace:Acel_0268"/>
<dbReference type="eggNOG" id="COG0377">
    <property type="taxonomic scope" value="Bacteria"/>
</dbReference>
<dbReference type="HOGENOM" id="CLU_055737_7_3_11"/>
<dbReference type="InParanoid" id="A0LRI2"/>
<dbReference type="OrthoDB" id="9786737at2"/>
<dbReference type="Proteomes" id="UP000008221">
    <property type="component" value="Chromosome"/>
</dbReference>
<dbReference type="GO" id="GO:0005886">
    <property type="term" value="C:plasma membrane"/>
    <property type="evidence" value="ECO:0007669"/>
    <property type="project" value="UniProtKB-SubCell"/>
</dbReference>
<dbReference type="GO" id="GO:0045271">
    <property type="term" value="C:respiratory chain complex I"/>
    <property type="evidence" value="ECO:0007669"/>
    <property type="project" value="TreeGrafter"/>
</dbReference>
<dbReference type="GO" id="GO:0051539">
    <property type="term" value="F:4 iron, 4 sulfur cluster binding"/>
    <property type="evidence" value="ECO:0007669"/>
    <property type="project" value="UniProtKB-KW"/>
</dbReference>
<dbReference type="GO" id="GO:0005506">
    <property type="term" value="F:iron ion binding"/>
    <property type="evidence" value="ECO:0007669"/>
    <property type="project" value="UniProtKB-UniRule"/>
</dbReference>
<dbReference type="GO" id="GO:0008137">
    <property type="term" value="F:NADH dehydrogenase (ubiquinone) activity"/>
    <property type="evidence" value="ECO:0007669"/>
    <property type="project" value="InterPro"/>
</dbReference>
<dbReference type="GO" id="GO:0050136">
    <property type="term" value="F:NADH:ubiquinone reductase (non-electrogenic) activity"/>
    <property type="evidence" value="ECO:0007669"/>
    <property type="project" value="UniProtKB-UniRule"/>
</dbReference>
<dbReference type="GO" id="GO:0048038">
    <property type="term" value="F:quinone binding"/>
    <property type="evidence" value="ECO:0007669"/>
    <property type="project" value="UniProtKB-KW"/>
</dbReference>
<dbReference type="GO" id="GO:0009060">
    <property type="term" value="P:aerobic respiration"/>
    <property type="evidence" value="ECO:0007669"/>
    <property type="project" value="TreeGrafter"/>
</dbReference>
<dbReference type="GO" id="GO:0015990">
    <property type="term" value="P:electron transport coupled proton transport"/>
    <property type="evidence" value="ECO:0007669"/>
    <property type="project" value="TreeGrafter"/>
</dbReference>
<dbReference type="FunFam" id="3.40.50.12280:FF:000004">
    <property type="entry name" value="NADH-quinone oxidoreductase subunit B"/>
    <property type="match status" value="1"/>
</dbReference>
<dbReference type="Gene3D" id="3.40.50.12280">
    <property type="match status" value="1"/>
</dbReference>
<dbReference type="HAMAP" id="MF_01356">
    <property type="entry name" value="NDH1_NuoB"/>
    <property type="match status" value="1"/>
</dbReference>
<dbReference type="InterPro" id="IPR006137">
    <property type="entry name" value="NADH_UbQ_OxRdtase-like_20kDa"/>
</dbReference>
<dbReference type="InterPro" id="IPR006138">
    <property type="entry name" value="NADH_UQ_OxRdtase_20Kd_su"/>
</dbReference>
<dbReference type="NCBIfam" id="TIGR01957">
    <property type="entry name" value="nuoB_fam"/>
    <property type="match status" value="1"/>
</dbReference>
<dbReference type="NCBIfam" id="NF005012">
    <property type="entry name" value="PRK06411.1"/>
    <property type="match status" value="1"/>
</dbReference>
<dbReference type="PANTHER" id="PTHR11995">
    <property type="entry name" value="NADH DEHYDROGENASE"/>
    <property type="match status" value="1"/>
</dbReference>
<dbReference type="PANTHER" id="PTHR11995:SF14">
    <property type="entry name" value="NADH DEHYDROGENASE [UBIQUINONE] IRON-SULFUR PROTEIN 7, MITOCHONDRIAL"/>
    <property type="match status" value="1"/>
</dbReference>
<dbReference type="Pfam" id="PF01058">
    <property type="entry name" value="Oxidored_q6"/>
    <property type="match status" value="1"/>
</dbReference>
<dbReference type="SUPFAM" id="SSF56770">
    <property type="entry name" value="HydA/Nqo6-like"/>
    <property type="match status" value="1"/>
</dbReference>
<dbReference type="PROSITE" id="PS01150">
    <property type="entry name" value="COMPLEX1_20K"/>
    <property type="match status" value="1"/>
</dbReference>
<feature type="chain" id="PRO_0000376103" description="NADH-quinone oxidoreductase subunit B">
    <location>
        <begin position="1"/>
        <end position="184"/>
    </location>
</feature>
<feature type="region of interest" description="Disordered" evidence="2">
    <location>
        <begin position="164"/>
        <end position="184"/>
    </location>
</feature>
<feature type="binding site" evidence="1">
    <location>
        <position position="37"/>
    </location>
    <ligand>
        <name>[4Fe-4S] cluster</name>
        <dbReference type="ChEBI" id="CHEBI:49883"/>
    </ligand>
</feature>
<feature type="binding site" evidence="1">
    <location>
        <position position="38"/>
    </location>
    <ligand>
        <name>[4Fe-4S] cluster</name>
        <dbReference type="ChEBI" id="CHEBI:49883"/>
    </ligand>
</feature>
<feature type="binding site" evidence="1">
    <location>
        <position position="103"/>
    </location>
    <ligand>
        <name>[4Fe-4S] cluster</name>
        <dbReference type="ChEBI" id="CHEBI:49883"/>
    </ligand>
</feature>
<feature type="binding site" evidence="1">
    <location>
        <position position="132"/>
    </location>
    <ligand>
        <name>[4Fe-4S] cluster</name>
        <dbReference type="ChEBI" id="CHEBI:49883"/>
    </ligand>
</feature>
<gene>
    <name evidence="1" type="primary">nuoB</name>
    <name type="ordered locus">Acel_0268</name>
</gene>
<reference key="1">
    <citation type="journal article" date="2009" name="Genome Res.">
        <title>Complete genome of the cellulolytic thermophile Acidothermus cellulolyticus 11B provides insights into its ecophysiological and evolutionary adaptations.</title>
        <authorList>
            <person name="Barabote R.D."/>
            <person name="Xie G."/>
            <person name="Leu D.H."/>
            <person name="Normand P."/>
            <person name="Necsulea A."/>
            <person name="Daubin V."/>
            <person name="Medigue C."/>
            <person name="Adney W.S."/>
            <person name="Xu X.C."/>
            <person name="Lapidus A."/>
            <person name="Parales R.E."/>
            <person name="Detter C."/>
            <person name="Pujic P."/>
            <person name="Bruce D."/>
            <person name="Lavire C."/>
            <person name="Challacombe J.F."/>
            <person name="Brettin T.S."/>
            <person name="Berry A.M."/>
        </authorList>
    </citation>
    <scope>NUCLEOTIDE SEQUENCE [LARGE SCALE GENOMIC DNA]</scope>
    <source>
        <strain>ATCC 43068 / DSM 8971 / 11B</strain>
    </source>
</reference>
<evidence type="ECO:0000255" key="1">
    <source>
        <dbReference type="HAMAP-Rule" id="MF_01356"/>
    </source>
</evidence>
<evidence type="ECO:0000256" key="2">
    <source>
        <dbReference type="SAM" id="MobiDB-lite"/>
    </source>
</evidence>
<sequence>MGIEEKIPGGFLLTTVEKAVGWVRKSSLWPATFGLACCAIEMMATGAGRYDLARFGMEVFRASPRQADLMIVAGRVSQKMAPVLRQIYDQMPEPKWVLAMGVCASSGGMFNNYAIVQGVDHVVPVDMYLPGCPPRPEMLMHAILELHEKIKSTKLGVHAVREAHEREEAAKHALPTHSMKGLLR</sequence>
<organism>
    <name type="scientific">Acidothermus cellulolyticus (strain ATCC 43068 / DSM 8971 / 11B)</name>
    <dbReference type="NCBI Taxonomy" id="351607"/>
    <lineage>
        <taxon>Bacteria</taxon>
        <taxon>Bacillati</taxon>
        <taxon>Actinomycetota</taxon>
        <taxon>Actinomycetes</taxon>
        <taxon>Acidothermales</taxon>
        <taxon>Acidothermaceae</taxon>
        <taxon>Acidothermus</taxon>
    </lineage>
</organism>
<accession>A0LRI2</accession>
<keyword id="KW-0004">4Fe-4S</keyword>
<keyword id="KW-1003">Cell membrane</keyword>
<keyword id="KW-0408">Iron</keyword>
<keyword id="KW-0411">Iron-sulfur</keyword>
<keyword id="KW-0472">Membrane</keyword>
<keyword id="KW-0479">Metal-binding</keyword>
<keyword id="KW-0520">NAD</keyword>
<keyword id="KW-0874">Quinone</keyword>
<keyword id="KW-1185">Reference proteome</keyword>
<keyword id="KW-1278">Translocase</keyword>
<keyword id="KW-0813">Transport</keyword>
<protein>
    <recommendedName>
        <fullName evidence="1">NADH-quinone oxidoreductase subunit B</fullName>
        <ecNumber evidence="1">7.1.1.-</ecNumber>
    </recommendedName>
    <alternativeName>
        <fullName evidence="1">NADH dehydrogenase I subunit B</fullName>
    </alternativeName>
    <alternativeName>
        <fullName evidence="1">NDH-1 subunit B</fullName>
    </alternativeName>
</protein>